<evidence type="ECO:0000255" key="1">
    <source>
        <dbReference type="HAMAP-Rule" id="MF_01011"/>
    </source>
</evidence>
<sequence>MNCNYFGICASCTLFDKTYEEQLNYKIQREKERFSNFTNIDFDIIKSNESNFRNRAEFRIWWEKGENNKEILSYAMNDFKKNILKINSCEMVSFHIKELMPKLIDELQNDLELSFKLFAVEFLGSSTKDMLVTLIYHKKLEESWIQKAKEIEKKLNIKIIGRSKKQRLVLTNDYINETLNISNQNFFFAYEENGFTQPNTNVNVQMIEWVLENTKNSSKDLCELYCGGGNFTIPLSTKFRKVLATEISKTSIKSALRNCSLNKIESISFIRMSAEDFVQALNKVRAFNRLKDINLDDYEFDTIFMDPPRSGLDDTTRNLAKDFENIIYISCNPETLHRDLEELTKTHEIEKFALFDQFAFTNHIESGVILRKLKD</sequence>
<accession>A8EWU8</accession>
<comment type="function">
    <text evidence="1">Dual-specificity methyltransferase that catalyzes the formation of 5-methyluridine at position 54 (m5U54) in all tRNAs, and that of position 341 (m5U341) in tmRNA (transfer-mRNA).</text>
</comment>
<comment type="catalytic activity">
    <reaction evidence="1">
        <text>uridine(54) in tRNA + S-adenosyl-L-methionine = 5-methyluridine(54) in tRNA + S-adenosyl-L-homocysteine + H(+)</text>
        <dbReference type="Rhea" id="RHEA:42712"/>
        <dbReference type="Rhea" id="RHEA-COMP:10167"/>
        <dbReference type="Rhea" id="RHEA-COMP:10193"/>
        <dbReference type="ChEBI" id="CHEBI:15378"/>
        <dbReference type="ChEBI" id="CHEBI:57856"/>
        <dbReference type="ChEBI" id="CHEBI:59789"/>
        <dbReference type="ChEBI" id="CHEBI:65315"/>
        <dbReference type="ChEBI" id="CHEBI:74447"/>
        <dbReference type="EC" id="2.1.1.35"/>
    </reaction>
</comment>
<comment type="catalytic activity">
    <reaction evidence="1">
        <text>uridine(341) in tmRNA + S-adenosyl-L-methionine = 5-methyluridine(341) in tmRNA + S-adenosyl-L-homocysteine + H(+)</text>
        <dbReference type="Rhea" id="RHEA:43612"/>
        <dbReference type="Rhea" id="RHEA-COMP:10630"/>
        <dbReference type="Rhea" id="RHEA-COMP:10631"/>
        <dbReference type="ChEBI" id="CHEBI:15378"/>
        <dbReference type="ChEBI" id="CHEBI:57856"/>
        <dbReference type="ChEBI" id="CHEBI:59789"/>
        <dbReference type="ChEBI" id="CHEBI:65315"/>
        <dbReference type="ChEBI" id="CHEBI:74447"/>
    </reaction>
</comment>
<comment type="similarity">
    <text evidence="1">Belongs to the class I-like SAM-binding methyltransferase superfamily. RNA M5U methyltransferase family. TrmA subfamily.</text>
</comment>
<reference key="1">
    <citation type="journal article" date="2007" name="PLoS ONE">
        <title>The complete genome sequence and analysis of the Epsilonproteobacterium Arcobacter butzleri.</title>
        <authorList>
            <person name="Miller W.G."/>
            <person name="Parker C.T."/>
            <person name="Rubenfield M."/>
            <person name="Mendz G.L."/>
            <person name="Woesten M.M.S.M."/>
            <person name="Ussery D.W."/>
            <person name="Stolz J.F."/>
            <person name="Binnewies T.T."/>
            <person name="Hallin P.F."/>
            <person name="Wang G."/>
            <person name="Malek J.A."/>
            <person name="Rogosin A."/>
            <person name="Stanker L.H."/>
            <person name="Mandrell R.E."/>
        </authorList>
    </citation>
    <scope>NUCLEOTIDE SEQUENCE [LARGE SCALE GENOMIC DNA]</scope>
    <source>
        <strain>RM4018</strain>
    </source>
</reference>
<keyword id="KW-0489">Methyltransferase</keyword>
<keyword id="KW-1185">Reference proteome</keyword>
<keyword id="KW-0949">S-adenosyl-L-methionine</keyword>
<keyword id="KW-0808">Transferase</keyword>
<keyword id="KW-0819">tRNA processing</keyword>
<protein>
    <recommendedName>
        <fullName evidence="1">tRNA/tmRNA (uracil-C(5))-methyltransferase</fullName>
        <ecNumber evidence="1">2.1.1.-</ecNumber>
        <ecNumber evidence="1">2.1.1.35</ecNumber>
    </recommendedName>
    <alternativeName>
        <fullName evidence="1">tRNA (uracil(54)-C(5))-methyltransferase</fullName>
    </alternativeName>
    <alternativeName>
        <fullName evidence="1">tRNA(m5U54)-methyltransferase</fullName>
        <shortName evidence="1">RUMT</shortName>
    </alternativeName>
    <alternativeName>
        <fullName evidence="1">tmRNA (uracil(341)-C(5))-methyltransferase</fullName>
    </alternativeName>
</protein>
<feature type="chain" id="PRO_0000319445" description="tRNA/tmRNA (uracil-C(5))-methyltransferase">
    <location>
        <begin position="1"/>
        <end position="375"/>
    </location>
</feature>
<feature type="active site" description="Nucleophile" evidence="1">
    <location>
        <position position="331"/>
    </location>
</feature>
<feature type="active site" description="Proton acceptor" evidence="1">
    <location>
        <position position="365"/>
    </location>
</feature>
<feature type="binding site" evidence="1">
    <location>
        <position position="197"/>
    </location>
    <ligand>
        <name>S-adenosyl-L-methionine</name>
        <dbReference type="ChEBI" id="CHEBI:59789"/>
    </ligand>
</feature>
<feature type="binding site" evidence="1">
    <location>
        <position position="225"/>
    </location>
    <ligand>
        <name>S-adenosyl-L-methionine</name>
        <dbReference type="ChEBI" id="CHEBI:59789"/>
    </ligand>
</feature>
<feature type="binding site" evidence="1">
    <location>
        <position position="230"/>
    </location>
    <ligand>
        <name>S-adenosyl-L-methionine</name>
        <dbReference type="ChEBI" id="CHEBI:59789"/>
    </ligand>
</feature>
<feature type="binding site" evidence="1">
    <location>
        <position position="246"/>
    </location>
    <ligand>
        <name>S-adenosyl-L-methionine</name>
        <dbReference type="ChEBI" id="CHEBI:59789"/>
    </ligand>
</feature>
<feature type="binding site" evidence="1">
    <location>
        <position position="306"/>
    </location>
    <ligand>
        <name>S-adenosyl-L-methionine</name>
        <dbReference type="ChEBI" id="CHEBI:59789"/>
    </ligand>
</feature>
<name>TRMA_ALIB4</name>
<proteinExistence type="inferred from homology"/>
<gene>
    <name evidence="1" type="primary">trmA</name>
    <name type="ordered locus">Abu_2207</name>
</gene>
<organism>
    <name type="scientific">Aliarcobacter butzleri (strain RM4018)</name>
    <name type="common">Arcobacter butzleri</name>
    <dbReference type="NCBI Taxonomy" id="367737"/>
    <lineage>
        <taxon>Bacteria</taxon>
        <taxon>Pseudomonadati</taxon>
        <taxon>Campylobacterota</taxon>
        <taxon>Epsilonproteobacteria</taxon>
        <taxon>Campylobacterales</taxon>
        <taxon>Arcobacteraceae</taxon>
        <taxon>Aliarcobacter</taxon>
    </lineage>
</organism>
<dbReference type="EC" id="2.1.1.-" evidence="1"/>
<dbReference type="EC" id="2.1.1.35" evidence="1"/>
<dbReference type="EMBL" id="CP000361">
    <property type="protein sequence ID" value="ABV68421.1"/>
    <property type="molecule type" value="Genomic_DNA"/>
</dbReference>
<dbReference type="RefSeq" id="WP_012148058.1">
    <property type="nucleotide sequence ID" value="NC_009850.1"/>
</dbReference>
<dbReference type="SMR" id="A8EWU8"/>
<dbReference type="STRING" id="367737.Abu_2207"/>
<dbReference type="GeneID" id="24304971"/>
<dbReference type="KEGG" id="abu:Abu_2207"/>
<dbReference type="eggNOG" id="COG2265">
    <property type="taxonomic scope" value="Bacteria"/>
</dbReference>
<dbReference type="HOGENOM" id="CLU_043022_0_0_7"/>
<dbReference type="Proteomes" id="UP000001136">
    <property type="component" value="Chromosome"/>
</dbReference>
<dbReference type="GO" id="GO:0005829">
    <property type="term" value="C:cytosol"/>
    <property type="evidence" value="ECO:0007669"/>
    <property type="project" value="TreeGrafter"/>
</dbReference>
<dbReference type="GO" id="GO:0019843">
    <property type="term" value="F:rRNA binding"/>
    <property type="evidence" value="ECO:0007669"/>
    <property type="project" value="TreeGrafter"/>
</dbReference>
<dbReference type="GO" id="GO:0030697">
    <property type="term" value="F:tRNA (uracil(54)-C5)-methyltransferase activity, S-adenosyl methionine-dependent"/>
    <property type="evidence" value="ECO:0007669"/>
    <property type="project" value="UniProtKB-EC"/>
</dbReference>
<dbReference type="GO" id="GO:0000049">
    <property type="term" value="F:tRNA binding"/>
    <property type="evidence" value="ECO:0007669"/>
    <property type="project" value="TreeGrafter"/>
</dbReference>
<dbReference type="GO" id="GO:0032259">
    <property type="term" value="P:methylation"/>
    <property type="evidence" value="ECO:0007669"/>
    <property type="project" value="UniProtKB-KW"/>
</dbReference>
<dbReference type="GO" id="GO:0008033">
    <property type="term" value="P:tRNA processing"/>
    <property type="evidence" value="ECO:0007669"/>
    <property type="project" value="UniProtKB-KW"/>
</dbReference>
<dbReference type="CDD" id="cd02440">
    <property type="entry name" value="AdoMet_MTases"/>
    <property type="match status" value="1"/>
</dbReference>
<dbReference type="FunFam" id="3.40.50.150:FF:000012">
    <property type="entry name" value="tRNA/tmRNA (uracil-C(5))-methyltransferase"/>
    <property type="match status" value="1"/>
</dbReference>
<dbReference type="Gene3D" id="2.40.50.1070">
    <property type="match status" value="1"/>
</dbReference>
<dbReference type="Gene3D" id="3.40.50.150">
    <property type="entry name" value="Vaccinia Virus protein VP39"/>
    <property type="match status" value="1"/>
</dbReference>
<dbReference type="HAMAP" id="MF_01011">
    <property type="entry name" value="RNA_methyltr_TrmA"/>
    <property type="match status" value="1"/>
</dbReference>
<dbReference type="InterPro" id="IPR030390">
    <property type="entry name" value="MeTrfase_TrmA_AS"/>
</dbReference>
<dbReference type="InterPro" id="IPR029063">
    <property type="entry name" value="SAM-dependent_MTases_sf"/>
</dbReference>
<dbReference type="InterPro" id="IPR011869">
    <property type="entry name" value="TrmA_MeTrfase"/>
</dbReference>
<dbReference type="InterPro" id="IPR010280">
    <property type="entry name" value="U5_MeTrfase_fam"/>
</dbReference>
<dbReference type="NCBIfam" id="TIGR02143">
    <property type="entry name" value="trmA_only"/>
    <property type="match status" value="1"/>
</dbReference>
<dbReference type="PANTHER" id="PTHR47790">
    <property type="entry name" value="TRNA/TMRNA (URACIL-C(5))-METHYLTRANSFERASE"/>
    <property type="match status" value="1"/>
</dbReference>
<dbReference type="PANTHER" id="PTHR47790:SF2">
    <property type="entry name" value="TRNA_TMRNA (URACIL-C(5))-METHYLTRANSFERASE"/>
    <property type="match status" value="1"/>
</dbReference>
<dbReference type="Pfam" id="PF05958">
    <property type="entry name" value="tRNA_U5-meth_tr"/>
    <property type="match status" value="1"/>
</dbReference>
<dbReference type="SUPFAM" id="SSF53335">
    <property type="entry name" value="S-adenosyl-L-methionine-dependent methyltransferases"/>
    <property type="match status" value="1"/>
</dbReference>
<dbReference type="PROSITE" id="PS51687">
    <property type="entry name" value="SAM_MT_RNA_M5U"/>
    <property type="match status" value="1"/>
</dbReference>
<dbReference type="PROSITE" id="PS01230">
    <property type="entry name" value="TRMA_1"/>
    <property type="match status" value="1"/>
</dbReference>